<accession>Q9LD07</accession>
<accession>Q0DW09</accession>
<accession>Q10T30</accession>
<accession>Q10T31</accession>
<gene>
    <name type="primary">EXPB7</name>
    <name evidence="8" type="ordered locus">Os03g0102700</name>
    <name evidence="7" type="ordered locus">LOC_Os03g01270</name>
    <name evidence="9" type="ORF">OsJ_09068</name>
</gene>
<feature type="signal peptide" evidence="2">
    <location>
        <begin position="1"/>
        <end position="30"/>
    </location>
</feature>
<feature type="chain" id="PRO_0000252018" description="Expansin-B7">
    <location>
        <begin position="31"/>
        <end position="327"/>
    </location>
</feature>
<feature type="domain" description="Expansin-like EG45" evidence="4">
    <location>
        <begin position="112"/>
        <end position="218"/>
    </location>
</feature>
<feature type="domain" description="Expansin-like CBD" evidence="3">
    <location>
        <begin position="231"/>
        <end position="322"/>
    </location>
</feature>
<feature type="region of interest" description="Disordered" evidence="5">
    <location>
        <begin position="30"/>
        <end position="88"/>
    </location>
</feature>
<feature type="compositionally biased region" description="Low complexity" evidence="5">
    <location>
        <begin position="44"/>
        <end position="56"/>
    </location>
</feature>
<feature type="compositionally biased region" description="Pro residues" evidence="5">
    <location>
        <begin position="57"/>
        <end position="75"/>
    </location>
</feature>
<feature type="glycosylation site" description="N-linked (GlcNAc...) asparagine" evidence="2">
    <location>
        <position position="45"/>
    </location>
</feature>
<feature type="glycosylation site" description="N-linked (GlcNAc...) asparagine" evidence="2">
    <location>
        <position position="52"/>
    </location>
</feature>
<feature type="glycosylation site" description="N-linked (GlcNAc...) asparagine" evidence="2">
    <location>
        <position position="82"/>
    </location>
</feature>
<feature type="glycosylation site" description="N-linked (GlcNAc...) asparagine" evidence="2">
    <location>
        <position position="298"/>
    </location>
</feature>
<feature type="disulfide bond" evidence="4">
    <location>
        <begin position="115"/>
        <end position="143"/>
    </location>
</feature>
<feature type="disulfide bond" evidence="4">
    <location>
        <begin position="146"/>
        <end position="213"/>
    </location>
</feature>
<feature type="disulfide bond" evidence="4">
    <location>
        <begin position="151"/>
        <end position="157"/>
    </location>
</feature>
<evidence type="ECO:0000250" key="1"/>
<evidence type="ECO:0000255" key="2"/>
<evidence type="ECO:0000255" key="3">
    <source>
        <dbReference type="PROSITE-ProRule" id="PRU00078"/>
    </source>
</evidence>
<evidence type="ECO:0000255" key="4">
    <source>
        <dbReference type="PROSITE-ProRule" id="PRU00079"/>
    </source>
</evidence>
<evidence type="ECO:0000256" key="5">
    <source>
        <dbReference type="SAM" id="MobiDB-lite"/>
    </source>
</evidence>
<evidence type="ECO:0000305" key="6"/>
<evidence type="ECO:0000312" key="7">
    <source>
        <dbReference type="EMBL" id="ABF93499.1"/>
    </source>
</evidence>
<evidence type="ECO:0000312" key="8">
    <source>
        <dbReference type="EMBL" id="BAF10579.1"/>
    </source>
</evidence>
<evidence type="ECO:0000312" key="9">
    <source>
        <dbReference type="EMBL" id="EAZ25260.1"/>
    </source>
</evidence>
<sequence length="327" mass="34447">MAGRSRRRSFWSVGVAAALLCLLAAHGCSAKHHKPKPTPGGISGNASSSSSNSSTPSIPPPVAPTPTAPTPPIPSPGTGSSNGSSGGGGGGWLNARATWYGAPNGAGPDDNGGACGFKNVNLPPFSAMTSCGNEPLFKDGKGCGSCYQIRCVGHPACSGLPETVIITDMNYYPVSLYHFDLSGTAFGAMAKDNRNDELRHAGIIDIQFRRVPCQYPGLTVTFHVEQGSNPVYMAILVEYENGDGDVVQVDLMESRYSTGGVDGTPTGVWTPMRESWGSIWRLDTNHPLQGPFSLRITNESGKTLIADQVIPADWQPNTVYSSIVQFD</sequence>
<name>EXPB7_ORYSJ</name>
<comment type="function">
    <text evidence="1">May cause loosening and extension of plant cell walls by disrupting non-covalent bonding between cellulose microfibrils and matrix glucans. No enzymatic activity has been found. May be required for rapid internodal elongation in deepwater rice during submergence (By similarity).</text>
</comment>
<comment type="subcellular location">
    <subcellularLocation>
        <location evidence="1">Secreted</location>
        <location evidence="1">Cell wall</location>
    </subcellularLocation>
    <subcellularLocation>
        <location evidence="1">Membrane</location>
        <topology evidence="1">Peripheral membrane protein</topology>
    </subcellularLocation>
</comment>
<comment type="similarity">
    <text evidence="6">Belongs to the expansin family. Expansin B subfamily.</text>
</comment>
<comment type="sequence caution" evidence="6">
    <conflict type="erroneous gene model prediction">
        <sequence resource="EMBL-CDS" id="ABF93499"/>
    </conflict>
</comment>
<comment type="online information" name="EXPANSIN homepage">
    <link uri="https://www.dept.psu.edu/biology/groups/expansins/index.htm"/>
</comment>
<organism>
    <name type="scientific">Oryza sativa subsp. japonica</name>
    <name type="common">Rice</name>
    <dbReference type="NCBI Taxonomy" id="39947"/>
    <lineage>
        <taxon>Eukaryota</taxon>
        <taxon>Viridiplantae</taxon>
        <taxon>Streptophyta</taxon>
        <taxon>Embryophyta</taxon>
        <taxon>Tracheophyta</taxon>
        <taxon>Spermatophyta</taxon>
        <taxon>Magnoliopsida</taxon>
        <taxon>Liliopsida</taxon>
        <taxon>Poales</taxon>
        <taxon>Poaceae</taxon>
        <taxon>BOP clade</taxon>
        <taxon>Oryzoideae</taxon>
        <taxon>Oryzeae</taxon>
        <taxon>Oryzinae</taxon>
        <taxon>Oryza</taxon>
        <taxon>Oryza sativa</taxon>
    </lineage>
</organism>
<keyword id="KW-0134">Cell wall</keyword>
<keyword id="KW-0961">Cell wall biogenesis/degradation</keyword>
<keyword id="KW-1015">Disulfide bond</keyword>
<keyword id="KW-0325">Glycoprotein</keyword>
<keyword id="KW-0472">Membrane</keyword>
<keyword id="KW-1185">Reference proteome</keyword>
<keyword id="KW-0964">Secreted</keyword>
<keyword id="KW-0732">Signal</keyword>
<dbReference type="EMBL" id="AF261275">
    <property type="protein sequence ID" value="AAF72988.1"/>
    <property type="molecule type" value="mRNA"/>
</dbReference>
<dbReference type="EMBL" id="AC125411">
    <property type="status" value="NOT_ANNOTATED_CDS"/>
    <property type="molecule type" value="Genomic_DNA"/>
</dbReference>
<dbReference type="EMBL" id="DP000009">
    <property type="protein sequence ID" value="ABF93498.1"/>
    <property type="molecule type" value="Genomic_DNA"/>
</dbReference>
<dbReference type="EMBL" id="DP000009">
    <property type="protein sequence ID" value="ABF93499.1"/>
    <property type="status" value="ALT_SEQ"/>
    <property type="molecule type" value="Genomic_DNA"/>
</dbReference>
<dbReference type="EMBL" id="AP008209">
    <property type="protein sequence ID" value="BAF10579.1"/>
    <property type="molecule type" value="Genomic_DNA"/>
</dbReference>
<dbReference type="EMBL" id="AP014959">
    <property type="status" value="NOT_ANNOTATED_CDS"/>
    <property type="molecule type" value="Genomic_DNA"/>
</dbReference>
<dbReference type="EMBL" id="CM000140">
    <property type="protein sequence ID" value="EAZ25260.1"/>
    <property type="molecule type" value="Genomic_DNA"/>
</dbReference>
<dbReference type="RefSeq" id="XP_015632130.1">
    <property type="nucleotide sequence ID" value="XM_015776644.1"/>
</dbReference>
<dbReference type="SMR" id="Q9LD07"/>
<dbReference type="FunCoup" id="Q9LD07">
    <property type="interactions" value="11"/>
</dbReference>
<dbReference type="STRING" id="39947.Q9LD07"/>
<dbReference type="GlyCosmos" id="Q9LD07">
    <property type="glycosylation" value="4 sites, No reported glycans"/>
</dbReference>
<dbReference type="PaxDb" id="39947-Q9LD07"/>
<dbReference type="KEGG" id="dosa:Os03g0102700"/>
<dbReference type="eggNOG" id="ENOG502QRTE">
    <property type="taxonomic scope" value="Eukaryota"/>
</dbReference>
<dbReference type="HOGENOM" id="CLU_027462_1_1_1"/>
<dbReference type="InParanoid" id="Q9LD07"/>
<dbReference type="OrthoDB" id="613806at2759"/>
<dbReference type="Proteomes" id="UP000000763">
    <property type="component" value="Chromosome 3"/>
</dbReference>
<dbReference type="Proteomes" id="UP000007752">
    <property type="component" value="Chromosome 3"/>
</dbReference>
<dbReference type="Proteomes" id="UP000059680">
    <property type="component" value="Chromosome 3"/>
</dbReference>
<dbReference type="GO" id="GO:0005576">
    <property type="term" value="C:extracellular region"/>
    <property type="evidence" value="ECO:0007669"/>
    <property type="project" value="UniProtKB-KW"/>
</dbReference>
<dbReference type="GO" id="GO:0016020">
    <property type="term" value="C:membrane"/>
    <property type="evidence" value="ECO:0007669"/>
    <property type="project" value="UniProtKB-SubCell"/>
</dbReference>
<dbReference type="GO" id="GO:0009828">
    <property type="term" value="P:plant-type cell wall loosening"/>
    <property type="evidence" value="ECO:0000250"/>
    <property type="project" value="UniProtKB"/>
</dbReference>
<dbReference type="GO" id="GO:0019953">
    <property type="term" value="P:sexual reproduction"/>
    <property type="evidence" value="ECO:0007669"/>
    <property type="project" value="InterPro"/>
</dbReference>
<dbReference type="CDD" id="cd22275">
    <property type="entry name" value="DPBB_EXPB_N"/>
    <property type="match status" value="1"/>
</dbReference>
<dbReference type="Gene3D" id="2.60.40.760">
    <property type="entry name" value="Expansin, cellulose-binding-like domain"/>
    <property type="match status" value="1"/>
</dbReference>
<dbReference type="Gene3D" id="2.40.40.10">
    <property type="entry name" value="RlpA-like domain"/>
    <property type="match status" value="1"/>
</dbReference>
<dbReference type="InterPro" id="IPR007118">
    <property type="entry name" value="Expan_Lol_pI"/>
</dbReference>
<dbReference type="InterPro" id="IPR007112">
    <property type="entry name" value="Expansin/allergen_DPBB_dom"/>
</dbReference>
<dbReference type="InterPro" id="IPR007117">
    <property type="entry name" value="Expansin_CBD"/>
</dbReference>
<dbReference type="InterPro" id="IPR036749">
    <property type="entry name" value="Expansin_CBD_sf"/>
</dbReference>
<dbReference type="InterPro" id="IPR005795">
    <property type="entry name" value="LolPI"/>
</dbReference>
<dbReference type="InterPro" id="IPR009009">
    <property type="entry name" value="RlpA-like_DPBB"/>
</dbReference>
<dbReference type="InterPro" id="IPR036908">
    <property type="entry name" value="RlpA-like_sf"/>
</dbReference>
<dbReference type="PANTHER" id="PTHR31692">
    <property type="entry name" value="EXPANSIN-B3"/>
    <property type="match status" value="1"/>
</dbReference>
<dbReference type="PANTHER" id="PTHR31692:SF23">
    <property type="entry name" value="EXPANSIN-B7"/>
    <property type="match status" value="1"/>
</dbReference>
<dbReference type="Pfam" id="PF03330">
    <property type="entry name" value="DPBB_1"/>
    <property type="match status" value="1"/>
</dbReference>
<dbReference type="Pfam" id="PF01357">
    <property type="entry name" value="Expansin_C"/>
    <property type="match status" value="1"/>
</dbReference>
<dbReference type="PRINTS" id="PR01225">
    <property type="entry name" value="EXPANSNFAMLY"/>
</dbReference>
<dbReference type="PRINTS" id="PR00829">
    <property type="entry name" value="LOLP1ALLERGN"/>
</dbReference>
<dbReference type="SMART" id="SM00837">
    <property type="entry name" value="DPBB_1"/>
    <property type="match status" value="1"/>
</dbReference>
<dbReference type="SUPFAM" id="SSF50685">
    <property type="entry name" value="Barwin-like endoglucanases"/>
    <property type="match status" value="1"/>
</dbReference>
<dbReference type="SUPFAM" id="SSF49590">
    <property type="entry name" value="PHL pollen allergen"/>
    <property type="match status" value="1"/>
</dbReference>
<dbReference type="PROSITE" id="PS50843">
    <property type="entry name" value="EXPANSIN_CBD"/>
    <property type="match status" value="1"/>
</dbReference>
<dbReference type="PROSITE" id="PS50842">
    <property type="entry name" value="EXPANSIN_EG45"/>
    <property type="match status" value="1"/>
</dbReference>
<protein>
    <recommendedName>
        <fullName>Expansin-B7</fullName>
    </recommendedName>
    <alternativeName>
        <fullName>Beta-expansin-7</fullName>
    </alternativeName>
    <alternativeName>
        <fullName>OsEXPB7</fullName>
    </alternativeName>
    <alternativeName>
        <fullName>OsaEXPb1.12</fullName>
    </alternativeName>
</protein>
<reference key="1">
    <citation type="journal article" date="1997" name="Proc. Natl. Acad. Sci. U.S.A.">
        <title>Group I allergens of grass pollen as cell wall-loosening agents.</title>
        <authorList>
            <person name="Cosgrove D.J."/>
            <person name="Bedinger P.A."/>
            <person name="Durachko D.M."/>
        </authorList>
    </citation>
    <scope>NUCLEOTIDE SEQUENCE [MRNA]</scope>
</reference>
<reference key="2">
    <citation type="journal article" date="2005" name="Genome Res.">
        <title>Sequence, annotation, and analysis of synteny between rice chromosome 3 and diverged grass species.</title>
        <authorList>
            <consortium name="The rice chromosome 3 sequencing consortium"/>
            <person name="Buell C.R."/>
            <person name="Yuan Q."/>
            <person name="Ouyang S."/>
            <person name="Liu J."/>
            <person name="Zhu W."/>
            <person name="Wang A."/>
            <person name="Maiti R."/>
            <person name="Haas B."/>
            <person name="Wortman J."/>
            <person name="Pertea M."/>
            <person name="Jones K.M."/>
            <person name="Kim M."/>
            <person name="Overton L."/>
            <person name="Tsitrin T."/>
            <person name="Fadrosh D."/>
            <person name="Bera J."/>
            <person name="Weaver B."/>
            <person name="Jin S."/>
            <person name="Johri S."/>
            <person name="Reardon M."/>
            <person name="Webb K."/>
            <person name="Hill J."/>
            <person name="Moffat K."/>
            <person name="Tallon L."/>
            <person name="Van Aken S."/>
            <person name="Lewis M."/>
            <person name="Utterback T."/>
            <person name="Feldblyum T."/>
            <person name="Zismann V."/>
            <person name="Iobst S."/>
            <person name="Hsiao J."/>
            <person name="de Vazeille A.R."/>
            <person name="Salzberg S.L."/>
            <person name="White O."/>
            <person name="Fraser C.M."/>
            <person name="Yu Y."/>
            <person name="Kim H."/>
            <person name="Rambo T."/>
            <person name="Currie J."/>
            <person name="Collura K."/>
            <person name="Kernodle-Thompson S."/>
            <person name="Wei F."/>
            <person name="Kudrna K."/>
            <person name="Ammiraju J.S.S."/>
            <person name="Luo M."/>
            <person name="Goicoechea J.L."/>
            <person name="Wing R.A."/>
            <person name="Henry D."/>
            <person name="Oates R."/>
            <person name="Palmer M."/>
            <person name="Pries G."/>
            <person name="Saski C."/>
            <person name="Simmons J."/>
            <person name="Soderlund C."/>
            <person name="Nelson W."/>
            <person name="de la Bastide M."/>
            <person name="Spiegel L."/>
            <person name="Nascimento L."/>
            <person name="Huang E."/>
            <person name="Preston R."/>
            <person name="Zutavern T."/>
            <person name="Palmer L."/>
            <person name="O'Shaughnessy A."/>
            <person name="Dike S."/>
            <person name="McCombie W.R."/>
            <person name="Minx P."/>
            <person name="Cordum H."/>
            <person name="Wilson R."/>
            <person name="Jin W."/>
            <person name="Lee H.R."/>
            <person name="Jiang J."/>
            <person name="Jackson S."/>
        </authorList>
    </citation>
    <scope>NUCLEOTIDE SEQUENCE [LARGE SCALE GENOMIC DNA]</scope>
    <source>
        <strain>cv. Nipponbare</strain>
    </source>
</reference>
<reference key="3">
    <citation type="journal article" date="2005" name="Nature">
        <title>The map-based sequence of the rice genome.</title>
        <authorList>
            <consortium name="International rice genome sequencing project (IRGSP)"/>
        </authorList>
    </citation>
    <scope>NUCLEOTIDE SEQUENCE [LARGE SCALE GENOMIC DNA]</scope>
    <source>
        <strain>cv. Nipponbare</strain>
    </source>
</reference>
<reference key="4">
    <citation type="journal article" date="2008" name="Nucleic Acids Res.">
        <title>The rice annotation project database (RAP-DB): 2008 update.</title>
        <authorList>
            <consortium name="The rice annotation project (RAP)"/>
        </authorList>
    </citation>
    <scope>GENOME REANNOTATION</scope>
    <source>
        <strain>cv. Nipponbare</strain>
    </source>
</reference>
<reference key="5">
    <citation type="journal article" date="2013" name="Rice">
        <title>Improvement of the Oryza sativa Nipponbare reference genome using next generation sequence and optical map data.</title>
        <authorList>
            <person name="Kawahara Y."/>
            <person name="de la Bastide M."/>
            <person name="Hamilton J.P."/>
            <person name="Kanamori H."/>
            <person name="McCombie W.R."/>
            <person name="Ouyang S."/>
            <person name="Schwartz D.C."/>
            <person name="Tanaka T."/>
            <person name="Wu J."/>
            <person name="Zhou S."/>
            <person name="Childs K.L."/>
            <person name="Davidson R.M."/>
            <person name="Lin H."/>
            <person name="Quesada-Ocampo L."/>
            <person name="Vaillancourt B."/>
            <person name="Sakai H."/>
            <person name="Lee S.S."/>
            <person name="Kim J."/>
            <person name="Numa H."/>
            <person name="Itoh T."/>
            <person name="Buell C.R."/>
            <person name="Matsumoto T."/>
        </authorList>
    </citation>
    <scope>GENOME REANNOTATION</scope>
    <source>
        <strain>cv. Nipponbare</strain>
    </source>
</reference>
<reference key="6">
    <citation type="journal article" date="2005" name="PLoS Biol.">
        <title>The genomes of Oryza sativa: a history of duplications.</title>
        <authorList>
            <person name="Yu J."/>
            <person name="Wang J."/>
            <person name="Lin W."/>
            <person name="Li S."/>
            <person name="Li H."/>
            <person name="Zhou J."/>
            <person name="Ni P."/>
            <person name="Dong W."/>
            <person name="Hu S."/>
            <person name="Zeng C."/>
            <person name="Zhang J."/>
            <person name="Zhang Y."/>
            <person name="Li R."/>
            <person name="Xu Z."/>
            <person name="Li S."/>
            <person name="Li X."/>
            <person name="Zheng H."/>
            <person name="Cong L."/>
            <person name="Lin L."/>
            <person name="Yin J."/>
            <person name="Geng J."/>
            <person name="Li G."/>
            <person name="Shi J."/>
            <person name="Liu J."/>
            <person name="Lv H."/>
            <person name="Li J."/>
            <person name="Wang J."/>
            <person name="Deng Y."/>
            <person name="Ran L."/>
            <person name="Shi X."/>
            <person name="Wang X."/>
            <person name="Wu Q."/>
            <person name="Li C."/>
            <person name="Ren X."/>
            <person name="Wang J."/>
            <person name="Wang X."/>
            <person name="Li D."/>
            <person name="Liu D."/>
            <person name="Zhang X."/>
            <person name="Ji Z."/>
            <person name="Zhao W."/>
            <person name="Sun Y."/>
            <person name="Zhang Z."/>
            <person name="Bao J."/>
            <person name="Han Y."/>
            <person name="Dong L."/>
            <person name="Ji J."/>
            <person name="Chen P."/>
            <person name="Wu S."/>
            <person name="Liu J."/>
            <person name="Xiao Y."/>
            <person name="Bu D."/>
            <person name="Tan J."/>
            <person name="Yang L."/>
            <person name="Ye C."/>
            <person name="Zhang J."/>
            <person name="Xu J."/>
            <person name="Zhou Y."/>
            <person name="Yu Y."/>
            <person name="Zhang B."/>
            <person name="Zhuang S."/>
            <person name="Wei H."/>
            <person name="Liu B."/>
            <person name="Lei M."/>
            <person name="Yu H."/>
            <person name="Li Y."/>
            <person name="Xu H."/>
            <person name="Wei S."/>
            <person name="He X."/>
            <person name="Fang L."/>
            <person name="Zhang Z."/>
            <person name="Zhang Y."/>
            <person name="Huang X."/>
            <person name="Su Z."/>
            <person name="Tong W."/>
            <person name="Li J."/>
            <person name="Tong Z."/>
            <person name="Li S."/>
            <person name="Ye J."/>
            <person name="Wang L."/>
            <person name="Fang L."/>
            <person name="Lei T."/>
            <person name="Chen C.-S."/>
            <person name="Chen H.-C."/>
            <person name="Xu Z."/>
            <person name="Li H."/>
            <person name="Huang H."/>
            <person name="Zhang F."/>
            <person name="Xu H."/>
            <person name="Li N."/>
            <person name="Zhao C."/>
            <person name="Li S."/>
            <person name="Dong L."/>
            <person name="Huang Y."/>
            <person name="Li L."/>
            <person name="Xi Y."/>
            <person name="Qi Q."/>
            <person name="Li W."/>
            <person name="Zhang B."/>
            <person name="Hu W."/>
            <person name="Zhang Y."/>
            <person name="Tian X."/>
            <person name="Jiao Y."/>
            <person name="Liang X."/>
            <person name="Jin J."/>
            <person name="Gao L."/>
            <person name="Zheng W."/>
            <person name="Hao B."/>
            <person name="Liu S.-M."/>
            <person name="Wang W."/>
            <person name="Yuan L."/>
            <person name="Cao M."/>
            <person name="McDermott J."/>
            <person name="Samudrala R."/>
            <person name="Wang J."/>
            <person name="Wong G.K.-S."/>
            <person name="Yang H."/>
        </authorList>
    </citation>
    <scope>NUCLEOTIDE SEQUENCE [LARGE SCALE GENOMIC DNA]</scope>
    <source>
        <strain>cv. Nipponbare</strain>
    </source>
</reference>
<reference key="7">
    <citation type="journal article" date="2004" name="Plant Mol. Biol.">
        <title>Nomenclature for members of the expansin superfamily of genes and proteins.</title>
        <authorList>
            <person name="Kende H."/>
            <person name="Bradford K.J."/>
            <person name="Brummell D.A."/>
            <person name="Cho H.-T."/>
            <person name="Cosgrove D.J."/>
            <person name="Fleming A.J."/>
            <person name="Gehring C."/>
            <person name="Lee Y."/>
            <person name="McQueen-Mason S.J."/>
            <person name="Rose J.K.C."/>
            <person name="Voesenek L.A.C."/>
        </authorList>
    </citation>
    <scope>NOMENCLATURE</scope>
</reference>
<proteinExistence type="evidence at transcript level"/>